<protein>
    <recommendedName>
        <fullName>Homocysteine S-methyltransferase 3</fullName>
        <ecNumber>2.1.1.10</ecNumber>
    </recommendedName>
    <alternativeName>
        <fullName>S-methylmethionine:homocysteine methyltransferase 3</fullName>
        <shortName>AtHMT-3</shortName>
        <shortName>SMM:Hcy S-methyltransferase 3</shortName>
    </alternativeName>
</protein>
<proteinExistence type="evidence at protein level"/>
<keyword id="KW-0028">Amino-acid biosynthesis</keyword>
<keyword id="KW-0479">Metal-binding</keyword>
<keyword id="KW-0486">Methionine biosynthesis</keyword>
<keyword id="KW-0489">Methyltransferase</keyword>
<keyword id="KW-1185">Reference proteome</keyword>
<keyword id="KW-0949">S-adenosyl-L-methionine</keyword>
<keyword id="KW-0808">Transferase</keyword>
<keyword id="KW-0862">Zinc</keyword>
<reference key="1">
    <citation type="journal article" date="2001" name="Plant J.">
        <title>The S-methylmethionine cycle in angiosperms: ubiquity, antiquity and activity.</title>
        <authorList>
            <person name="Ranocha P."/>
            <person name="McNeil S.D."/>
            <person name="Ziemak M.J."/>
            <person name="Li C."/>
            <person name="Tarczynski M.C."/>
            <person name="Hanson A.D."/>
        </authorList>
    </citation>
    <scope>NUCLEOTIDE SEQUENCE [MRNA]</scope>
    <scope>ENZYME ACTIVITY</scope>
    <scope>PROBABLE FUNCTION OF SMM CYCLE</scope>
    <scope>BIOPHYSICOCHEMICAL PROPERTIES</scope>
    <scope>TISSUE SPECIFICITY</scope>
    <source>
        <strain>cv. Columbia</strain>
        <tissue>Leaf</tissue>
    </source>
</reference>
<reference key="2">
    <citation type="journal article" date="2000" name="DNA Res.">
        <title>Structural analysis of Arabidopsis thaliana chromosome 3. I. Sequence features of the regions of 4,504,864 bp covered by sixty P1 and TAC clones.</title>
        <authorList>
            <person name="Sato S."/>
            <person name="Nakamura Y."/>
            <person name="Kaneko T."/>
            <person name="Katoh T."/>
            <person name="Asamizu E."/>
            <person name="Tabata S."/>
        </authorList>
    </citation>
    <scope>NUCLEOTIDE SEQUENCE [LARGE SCALE GENOMIC DNA]</scope>
    <source>
        <strain>cv. Columbia</strain>
    </source>
</reference>
<reference key="3">
    <citation type="journal article" date="2017" name="Plant J.">
        <title>Araport11: a complete reannotation of the Arabidopsis thaliana reference genome.</title>
        <authorList>
            <person name="Cheng C.Y."/>
            <person name="Krishnakumar V."/>
            <person name="Chan A.P."/>
            <person name="Thibaud-Nissen F."/>
            <person name="Schobel S."/>
            <person name="Town C.D."/>
        </authorList>
    </citation>
    <scope>GENOME REANNOTATION</scope>
    <source>
        <strain>cv. Columbia</strain>
    </source>
</reference>
<reference key="4">
    <citation type="journal article" date="2002" name="Science">
        <title>Functional annotation of a full-length Arabidopsis cDNA collection.</title>
        <authorList>
            <person name="Seki M."/>
            <person name="Narusaka M."/>
            <person name="Kamiya A."/>
            <person name="Ishida J."/>
            <person name="Satou M."/>
            <person name="Sakurai T."/>
            <person name="Nakajima M."/>
            <person name="Enju A."/>
            <person name="Akiyama K."/>
            <person name="Oono Y."/>
            <person name="Muramatsu M."/>
            <person name="Hayashizaki Y."/>
            <person name="Kawai J."/>
            <person name="Carninci P."/>
            <person name="Itoh M."/>
            <person name="Ishii Y."/>
            <person name="Arakawa T."/>
            <person name="Shibata K."/>
            <person name="Shinagawa A."/>
            <person name="Shinozaki K."/>
        </authorList>
    </citation>
    <scope>NUCLEOTIDE SEQUENCE [LARGE SCALE MRNA]</scope>
    <source>
        <strain>cv. Columbia</strain>
    </source>
</reference>
<reference key="5">
    <citation type="journal article" date="2003" name="Science">
        <title>Empirical analysis of transcriptional activity in the Arabidopsis genome.</title>
        <authorList>
            <person name="Yamada K."/>
            <person name="Lim J."/>
            <person name="Dale J.M."/>
            <person name="Chen H."/>
            <person name="Shinn P."/>
            <person name="Palm C.J."/>
            <person name="Southwick A.M."/>
            <person name="Wu H.C."/>
            <person name="Kim C.J."/>
            <person name="Nguyen M."/>
            <person name="Pham P.K."/>
            <person name="Cheuk R.F."/>
            <person name="Karlin-Newmann G."/>
            <person name="Liu S.X."/>
            <person name="Lam B."/>
            <person name="Sakano H."/>
            <person name="Wu T."/>
            <person name="Yu G."/>
            <person name="Miranda M."/>
            <person name="Quach H.L."/>
            <person name="Tripp M."/>
            <person name="Chang C.H."/>
            <person name="Lee J.M."/>
            <person name="Toriumi M.J."/>
            <person name="Chan M.M."/>
            <person name="Tang C.C."/>
            <person name="Onodera C.S."/>
            <person name="Deng J.M."/>
            <person name="Akiyama K."/>
            <person name="Ansari Y."/>
            <person name="Arakawa T."/>
            <person name="Banh J."/>
            <person name="Banno F."/>
            <person name="Bowser L."/>
            <person name="Brooks S.Y."/>
            <person name="Carninci P."/>
            <person name="Chao Q."/>
            <person name="Choy N."/>
            <person name="Enju A."/>
            <person name="Goldsmith A.D."/>
            <person name="Gurjal M."/>
            <person name="Hansen N.F."/>
            <person name="Hayashizaki Y."/>
            <person name="Johnson-Hopson C."/>
            <person name="Hsuan V.W."/>
            <person name="Iida K."/>
            <person name="Karnes M."/>
            <person name="Khan S."/>
            <person name="Koesema E."/>
            <person name="Ishida J."/>
            <person name="Jiang P.X."/>
            <person name="Jones T."/>
            <person name="Kawai J."/>
            <person name="Kamiya A."/>
            <person name="Meyers C."/>
            <person name="Nakajima M."/>
            <person name="Narusaka M."/>
            <person name="Seki M."/>
            <person name="Sakurai T."/>
            <person name="Satou M."/>
            <person name="Tamse R."/>
            <person name="Vaysberg M."/>
            <person name="Wallender E.K."/>
            <person name="Wong C."/>
            <person name="Yamamura Y."/>
            <person name="Yuan S."/>
            <person name="Shinozaki K."/>
            <person name="Davis R.W."/>
            <person name="Theologis A."/>
            <person name="Ecker J.R."/>
        </authorList>
    </citation>
    <scope>NUCLEOTIDE SEQUENCE [LARGE SCALE MRNA]</scope>
    <source>
        <strain>cv. Columbia</strain>
    </source>
</reference>
<reference key="6">
    <citation type="submission" date="2002-03" db="EMBL/GenBank/DDBJ databases">
        <title>Full-length cDNA from Arabidopsis thaliana.</title>
        <authorList>
            <person name="Brover V.V."/>
            <person name="Troukhan M.E."/>
            <person name="Alexandrov N.A."/>
            <person name="Lu Y.-P."/>
            <person name="Flavell R.B."/>
            <person name="Feldmann K.A."/>
        </authorList>
    </citation>
    <scope>NUCLEOTIDE SEQUENCE [LARGE SCALE MRNA]</scope>
</reference>
<name>HMT3_ARATH</name>
<organism>
    <name type="scientific">Arabidopsis thaliana</name>
    <name type="common">Mouse-ear cress</name>
    <dbReference type="NCBI Taxonomy" id="3702"/>
    <lineage>
        <taxon>Eukaryota</taxon>
        <taxon>Viridiplantae</taxon>
        <taxon>Streptophyta</taxon>
        <taxon>Embryophyta</taxon>
        <taxon>Tracheophyta</taxon>
        <taxon>Spermatophyta</taxon>
        <taxon>Magnoliopsida</taxon>
        <taxon>eudicotyledons</taxon>
        <taxon>Gunneridae</taxon>
        <taxon>Pentapetalae</taxon>
        <taxon>rosids</taxon>
        <taxon>malvids</taxon>
        <taxon>Brassicales</taxon>
        <taxon>Brassicaceae</taxon>
        <taxon>Camelineae</taxon>
        <taxon>Arabidopsis</taxon>
    </lineage>
</organism>
<dbReference type="EC" id="2.1.1.10"/>
<dbReference type="EMBL" id="AF297394">
    <property type="protein sequence ID" value="AAG10301.1"/>
    <property type="molecule type" value="mRNA"/>
</dbReference>
<dbReference type="EMBL" id="AB022223">
    <property type="protein sequence ID" value="BAB01249.1"/>
    <property type="molecule type" value="Genomic_DNA"/>
</dbReference>
<dbReference type="EMBL" id="CP002686">
    <property type="protein sequence ID" value="AEE76672.1"/>
    <property type="molecule type" value="Genomic_DNA"/>
</dbReference>
<dbReference type="EMBL" id="AK118021">
    <property type="protein sequence ID" value="BAC42654.1"/>
    <property type="molecule type" value="mRNA"/>
</dbReference>
<dbReference type="EMBL" id="BT005318">
    <property type="protein sequence ID" value="AAO63382.1"/>
    <property type="molecule type" value="mRNA"/>
</dbReference>
<dbReference type="EMBL" id="AY087554">
    <property type="protein sequence ID" value="AAM65096.1"/>
    <property type="molecule type" value="mRNA"/>
</dbReference>
<dbReference type="RefSeq" id="NP_566715.1">
    <property type="nucleotide sequence ID" value="NM_113173.3"/>
</dbReference>
<dbReference type="SMR" id="Q8LAX0"/>
<dbReference type="FunCoup" id="Q8LAX0">
    <property type="interactions" value="221"/>
</dbReference>
<dbReference type="STRING" id="3702.Q8LAX0"/>
<dbReference type="PaxDb" id="3702-AT3G22740.1"/>
<dbReference type="ProteomicsDB" id="230213"/>
<dbReference type="EnsemblPlants" id="AT3G22740.1">
    <property type="protein sequence ID" value="AT3G22740.1"/>
    <property type="gene ID" value="AT3G22740"/>
</dbReference>
<dbReference type="GeneID" id="821845"/>
<dbReference type="Gramene" id="AT3G22740.1">
    <property type="protein sequence ID" value="AT3G22740.1"/>
    <property type="gene ID" value="AT3G22740"/>
</dbReference>
<dbReference type="KEGG" id="ath:AT3G22740"/>
<dbReference type="Araport" id="AT3G22740"/>
<dbReference type="TAIR" id="AT3G22740">
    <property type="gene designation" value="HMT3"/>
</dbReference>
<dbReference type="eggNOG" id="KOG1579">
    <property type="taxonomic scope" value="Eukaryota"/>
</dbReference>
<dbReference type="HOGENOM" id="CLU_004914_3_2_1"/>
<dbReference type="InParanoid" id="Q8LAX0"/>
<dbReference type="OMA" id="TECYEAQ"/>
<dbReference type="PhylomeDB" id="Q8LAX0"/>
<dbReference type="BioCyc" id="ARA:AT3G22740-MONOMER"/>
<dbReference type="BioCyc" id="MetaCyc:AT3G22740-MONOMER"/>
<dbReference type="BRENDA" id="2.1.1.10">
    <property type="organism ID" value="399"/>
</dbReference>
<dbReference type="SABIO-RK" id="Q8LAX0"/>
<dbReference type="PRO" id="PR:Q8LAX0"/>
<dbReference type="Proteomes" id="UP000006548">
    <property type="component" value="Chromosome 3"/>
</dbReference>
<dbReference type="ExpressionAtlas" id="Q8LAX0">
    <property type="expression patterns" value="baseline and differential"/>
</dbReference>
<dbReference type="GO" id="GO:0061627">
    <property type="term" value="F:S-methylmethionine-homocysteine S-methyltransferase activity"/>
    <property type="evidence" value="ECO:0007669"/>
    <property type="project" value="RHEA"/>
</dbReference>
<dbReference type="GO" id="GO:0008270">
    <property type="term" value="F:zinc ion binding"/>
    <property type="evidence" value="ECO:0007669"/>
    <property type="project" value="InterPro"/>
</dbReference>
<dbReference type="GO" id="GO:0009086">
    <property type="term" value="P:methionine biosynthetic process"/>
    <property type="evidence" value="ECO:0007669"/>
    <property type="project" value="UniProtKB-KW"/>
</dbReference>
<dbReference type="GO" id="GO:0032259">
    <property type="term" value="P:methylation"/>
    <property type="evidence" value="ECO:0007669"/>
    <property type="project" value="UniProtKB-KW"/>
</dbReference>
<dbReference type="FunFam" id="3.20.20.330:FF:000002">
    <property type="entry name" value="Homocysteine S-methyltransferase"/>
    <property type="match status" value="1"/>
</dbReference>
<dbReference type="Gene3D" id="3.20.20.330">
    <property type="entry name" value="Homocysteine-binding-like domain"/>
    <property type="match status" value="1"/>
</dbReference>
<dbReference type="InterPro" id="IPR017226">
    <property type="entry name" value="Betaine-hCys_S-MeTrfase_BHMT"/>
</dbReference>
<dbReference type="InterPro" id="IPR003726">
    <property type="entry name" value="HCY_dom"/>
</dbReference>
<dbReference type="InterPro" id="IPR036589">
    <property type="entry name" value="HCY_dom_sf"/>
</dbReference>
<dbReference type="InterPro" id="IPR051486">
    <property type="entry name" value="Hcy_S-methyltransferase"/>
</dbReference>
<dbReference type="NCBIfam" id="NF007020">
    <property type="entry name" value="PRK09485.1"/>
    <property type="match status" value="1"/>
</dbReference>
<dbReference type="PANTHER" id="PTHR46015:SF10">
    <property type="entry name" value="HOMOCYSTEINE S-METHYLTRANSFERASE 3"/>
    <property type="match status" value="1"/>
</dbReference>
<dbReference type="PANTHER" id="PTHR46015">
    <property type="entry name" value="ZGC:172121"/>
    <property type="match status" value="1"/>
</dbReference>
<dbReference type="Pfam" id="PF02574">
    <property type="entry name" value="S-methyl_trans"/>
    <property type="match status" value="1"/>
</dbReference>
<dbReference type="PIRSF" id="PIRSF037505">
    <property type="entry name" value="Betaine_HMT"/>
    <property type="match status" value="1"/>
</dbReference>
<dbReference type="SUPFAM" id="SSF82282">
    <property type="entry name" value="Homocysteine S-methyltransferase"/>
    <property type="match status" value="1"/>
</dbReference>
<dbReference type="PROSITE" id="PS50970">
    <property type="entry name" value="HCY"/>
    <property type="match status" value="1"/>
</dbReference>
<evidence type="ECO:0000250" key="1"/>
<evidence type="ECO:0000255" key="2">
    <source>
        <dbReference type="PROSITE-ProRule" id="PRU00333"/>
    </source>
</evidence>
<evidence type="ECO:0000269" key="3">
    <source>
    </source>
</evidence>
<evidence type="ECO:0000305" key="4"/>
<gene>
    <name type="primary">HMT3</name>
    <name type="ordered locus">At3g22740</name>
    <name type="ORF">MWI23.11</name>
</gene>
<accession>Q8LAX0</accession>
<accession>Q9LUI7</accession>
<sequence>MGSFVKEETSSLMTDFLEKCGGYAVVDGGFATELQRHGADINDPLWSAKCLITSPHLVTKVHLDYLESGANIIITASYQATIQGFVAKGLSVGEAENLLRRSVEITYEAREIFYNRCTKGSWDFAYAGKASRRPILVAASVGSYGAYLADGSEYSGIYGDSVSKETLKDFHRRRVQILAKSGADLIAFETIPNKLEAEAYADLLEEEDIDIPAWFSFTSKDGVSVPRGDSVVECAKVADSCKNVVAIGINCTAPRYIHALIISLRQMTRKPIVVYPNSGEVYDGLNKKWIKSEGESEEDFVSYVSKWRDAGASLFGGCCRTTPNTIRAIAKVLSDEPSAASKPKFGQ</sequence>
<feature type="chain" id="PRO_0000114613" description="Homocysteine S-methyltransferase 3">
    <location>
        <begin position="1"/>
        <end position="347"/>
    </location>
</feature>
<feature type="domain" description="Hcy-binding" evidence="2">
    <location>
        <begin position="12"/>
        <end position="333"/>
    </location>
</feature>
<feature type="binding site" evidence="2">
    <location>
        <position position="251"/>
    </location>
    <ligand>
        <name>Zn(2+)</name>
        <dbReference type="ChEBI" id="CHEBI:29105"/>
    </ligand>
</feature>
<feature type="binding site" evidence="2">
    <location>
        <position position="318"/>
    </location>
    <ligand>
        <name>Zn(2+)</name>
        <dbReference type="ChEBI" id="CHEBI:29105"/>
    </ligand>
</feature>
<feature type="binding site" evidence="2">
    <location>
        <position position="319"/>
    </location>
    <ligand>
        <name>Zn(2+)</name>
        <dbReference type="ChEBI" id="CHEBI:29105"/>
    </ligand>
</feature>
<feature type="sequence conflict" description="In Ref. 6; AAM65096." evidence="4" ref="6">
    <original>A</original>
    <variation>E</variation>
    <location>
        <position position="24"/>
    </location>
</feature>
<feature type="sequence conflict" description="In Ref. 6; AAM65096." evidence="4" ref="6">
    <original>L</original>
    <variation>I</variation>
    <location>
        <position position="45"/>
    </location>
</feature>
<feature type="sequence conflict" description="In Ref. 6; AAM65096." evidence="4" ref="6">
    <original>C</original>
    <variation>W</variation>
    <location>
        <position position="117"/>
    </location>
</feature>
<comment type="function">
    <text>Catalyzes methyl transfer from S-methylmethionine (SMM) to adenosyl-L-homocysteine (AdoMet). SMM degradation (by HMT-1, HMT-2 and HMT-3) and biosynthesis (by MMT1) constitute the SMM cycle in plants, which is probably required to achieve short term control of AdoMet level.</text>
</comment>
<comment type="catalytic activity">
    <reaction evidence="3">
        <text>S-methyl-L-methionine + L-homocysteine = 2 L-methionine + H(+)</text>
        <dbReference type="Rhea" id="RHEA:26337"/>
        <dbReference type="ChEBI" id="CHEBI:15378"/>
        <dbReference type="ChEBI" id="CHEBI:57844"/>
        <dbReference type="ChEBI" id="CHEBI:58199"/>
        <dbReference type="ChEBI" id="CHEBI:58252"/>
        <dbReference type="EC" id="2.1.1.10"/>
    </reaction>
</comment>
<comment type="cofactor">
    <cofactor evidence="2">
        <name>Zn(2+)</name>
        <dbReference type="ChEBI" id="CHEBI:29105"/>
    </cofactor>
</comment>
<comment type="biophysicochemical properties">
    <kinetics>
        <KM evidence="3">335 uM for S-methylmethionine</KM>
        <KM evidence="3">1760 uM for (S,S)-AdoMet</KM>
    </kinetics>
</comment>
<comment type="subunit">
    <text evidence="1">Monomer.</text>
</comment>
<comment type="tissue specificity">
    <text evidence="3">Expressed predominantly in rosette leaves. Expressed in roots, cauline leaves and developing seeds.</text>
</comment>
<comment type="miscellaneous">
    <text>In contrast to HMT-1, it is not inhibited by methionine.</text>
</comment>